<proteinExistence type="evidence at protein level"/>
<sequence>MARRAKKMASNSGDSSPEPGIKEINETWKGAIACLGVALLFLMTIGVLYWQVVEKPDTNWVLRGQVSGLVWDKKSLSFSFKSLSQDKTFARIDARHLPVRGGALLNNHCWFNTTRFCHTWDGVANLQVTLDTPNQSVAECYRVEWTPLNCQVALQDCFSMVNTSWYGGGSMRLQYWPINNANINSQPFVISDLQDTPTGYGSVLERYFLGSTGVAVRVHQEVPLHVGIESRKQLCLGIPPNAEMQPLRYTICVSDSLRSAHQQFGTVIPVVQPDQPDTSILRLPHWRSQRVADIALKLEHNLKTFTRKLKLHRLGEGIMDLGEQSTLLLSNEVDETLQSQNRYRGLRQLRLSITLSPFTSIDSHHFQTTLQEGRENLWLGLPSAANGSQGPLLMKWKGKFAVKLNISNEEAQDWFIEQVHSLQRRLEVDYVNLEVGVGSPYVGQAQHHSCRLCGDDYINQFALLAEKLGNGTTVSAATRTAHLPVFVRMVPRQSDWSHAGLKGLIPSILHYSLLGYSFFIPDVIGGSLTDGFLADEELFVRWMQIATFLPVMSFSTPPWVFGETWIVNVTRSCIHRHQTFVVPLLMKYAAEWTSLGHPVFRPLWWVSPSDPNTFTINDEFLIGDEVLVAPVTESGKVHRDIYLPGNSFQWKDMNTAQVFEGGTLLREYPVALTEVAVFIRQKSKYTPAIAEIQQATT</sequence>
<name>SP15_TETCF</name>
<protein>
    <recommendedName>
        <fullName>SITS-binding protein</fullName>
    </recommendedName>
    <alternativeName>
        <fullName>SP105</fullName>
    </alternativeName>
</protein>
<accession>P19965</accession>
<keyword id="KW-0903">Direct protein sequencing</keyword>
<keyword id="KW-1015">Disulfide bond</keyword>
<keyword id="KW-0325">Glycoprotein</keyword>
<keyword id="KW-0472">Membrane</keyword>
<keyword id="KW-0812">Transmembrane</keyword>
<keyword id="KW-1133">Transmembrane helix</keyword>
<evidence type="ECO:0000255" key="1"/>
<evidence type="ECO:0000256" key="2">
    <source>
        <dbReference type="SAM" id="MobiDB-lite"/>
    </source>
</evidence>
<evidence type="ECO:0000305" key="3"/>
<reference key="1">
    <citation type="journal article" date="1989" name="Biochem. J.">
        <title>Primary structure of a novel 4-acetamido-4'-isothiocyanostilbene-2,2'-disulphonic acid (SITS)-binding membrane protein highly expressed in Torpedo californica electroplax.</title>
        <authorList>
            <person name="Jentsch T.J."/>
            <person name="Garcia A.M."/>
            <person name="Lodish H.F."/>
        </authorList>
    </citation>
    <scope>NUCLEOTIDE SEQUENCE [MRNA]</scope>
    <scope>PARTIAL PROTEIN SEQUENCE</scope>
</reference>
<feature type="initiator methionine" description="Removed">
    <location>
        <position position="1"/>
    </location>
</feature>
<feature type="chain" id="PRO_0000072054" description="SITS-binding protein">
    <location>
        <begin position="2"/>
        <end position="697"/>
    </location>
</feature>
<feature type="topological domain" description="Cytoplasmic" evidence="1">
    <location>
        <begin position="2"/>
        <end position="29"/>
    </location>
</feature>
<feature type="transmembrane region" description="Helical" evidence="1">
    <location>
        <begin position="30"/>
        <end position="50"/>
    </location>
</feature>
<feature type="transmembrane region" description="Helical" evidence="1">
    <location>
        <begin position="503"/>
        <end position="521"/>
    </location>
</feature>
<feature type="transmembrane region" description="Helical" evidence="1">
    <location>
        <begin position="542"/>
        <end position="562"/>
    </location>
</feature>
<feature type="region of interest" description="Disordered" evidence="2">
    <location>
        <begin position="1"/>
        <end position="20"/>
    </location>
</feature>
<feature type="glycosylation site" description="N-linked (GlcNAc...) asparagine" evidence="1">
    <location>
        <position position="112"/>
    </location>
</feature>
<feature type="glycosylation site" description="N-linked (GlcNAc...) asparagine" evidence="1">
    <location>
        <position position="134"/>
    </location>
</feature>
<feature type="glycosylation site" description="N-linked (GlcNAc...) asparagine" evidence="1">
    <location>
        <position position="162"/>
    </location>
</feature>
<feature type="glycosylation site" description="N-linked (GlcNAc...) asparagine" evidence="1">
    <location>
        <position position="386"/>
    </location>
</feature>
<feature type="glycosylation site" description="N-linked (GlcNAc...) asparagine" evidence="1">
    <location>
        <position position="405"/>
    </location>
</feature>
<feature type="glycosylation site" description="N-linked (GlcNAc...) asparagine" evidence="1">
    <location>
        <position position="470"/>
    </location>
</feature>
<feature type="glycosylation site" description="N-linked (GlcNAc...) asparagine" evidence="1">
    <location>
        <position position="568"/>
    </location>
</feature>
<dbReference type="EMBL" id="X16078">
    <property type="protein sequence ID" value="CAA34209.1"/>
    <property type="molecule type" value="mRNA"/>
</dbReference>
<dbReference type="PIR" id="S04987">
    <property type="entry name" value="S04987"/>
</dbReference>
<dbReference type="SMR" id="P19965"/>
<dbReference type="GO" id="GO:0016020">
    <property type="term" value="C:membrane"/>
    <property type="evidence" value="ECO:0007669"/>
    <property type="project" value="UniProtKB-SubCell"/>
</dbReference>
<dbReference type="GO" id="GO:0004553">
    <property type="term" value="F:hydrolase activity, hydrolyzing O-glycosyl compounds"/>
    <property type="evidence" value="ECO:0007669"/>
    <property type="project" value="InterPro"/>
</dbReference>
<dbReference type="GO" id="GO:0005975">
    <property type="term" value="P:carbohydrate metabolic process"/>
    <property type="evidence" value="ECO:0007669"/>
    <property type="project" value="InterPro"/>
</dbReference>
<dbReference type="CDD" id="cd06592">
    <property type="entry name" value="GH31_NET37"/>
    <property type="match status" value="1"/>
</dbReference>
<dbReference type="Gene3D" id="3.20.20.80">
    <property type="entry name" value="Glycosidases"/>
    <property type="match status" value="1"/>
</dbReference>
<dbReference type="Gene3D" id="2.60.40.1180">
    <property type="entry name" value="Golgi alpha-mannosidase II"/>
    <property type="match status" value="1"/>
</dbReference>
<dbReference type="InterPro" id="IPR050985">
    <property type="entry name" value="Alpha-glycosidase_related"/>
</dbReference>
<dbReference type="InterPro" id="IPR048395">
    <property type="entry name" value="Glyco_hydro_31_C"/>
</dbReference>
<dbReference type="InterPro" id="IPR000322">
    <property type="entry name" value="Glyco_hydro_31_TIM"/>
</dbReference>
<dbReference type="InterPro" id="IPR013780">
    <property type="entry name" value="Glyco_hydro_b"/>
</dbReference>
<dbReference type="InterPro" id="IPR017853">
    <property type="entry name" value="Glycoside_hydrolase_SF"/>
</dbReference>
<dbReference type="PANTHER" id="PTHR43053">
    <property type="entry name" value="GLYCOSIDASE FAMILY 31"/>
    <property type="match status" value="1"/>
</dbReference>
<dbReference type="PANTHER" id="PTHR43053:SF6">
    <property type="entry name" value="SITS-BINDING PROTEIN"/>
    <property type="match status" value="1"/>
</dbReference>
<dbReference type="Pfam" id="PF01055">
    <property type="entry name" value="Glyco_hydro_31_2nd"/>
    <property type="match status" value="1"/>
</dbReference>
<dbReference type="Pfam" id="PF21365">
    <property type="entry name" value="Glyco_hydro_31_3rd"/>
    <property type="match status" value="1"/>
</dbReference>
<dbReference type="SUPFAM" id="SSF51445">
    <property type="entry name" value="(Trans)glycosidases"/>
    <property type="match status" value="1"/>
</dbReference>
<dbReference type="SUPFAM" id="SSF51011">
    <property type="entry name" value="Glycosyl hydrolase domain"/>
    <property type="match status" value="1"/>
</dbReference>
<organism>
    <name type="scientific">Tetronarce californica</name>
    <name type="common">Pacific electric ray</name>
    <name type="synonym">Torpedo californica</name>
    <dbReference type="NCBI Taxonomy" id="7787"/>
    <lineage>
        <taxon>Eukaryota</taxon>
        <taxon>Metazoa</taxon>
        <taxon>Chordata</taxon>
        <taxon>Craniata</taxon>
        <taxon>Vertebrata</taxon>
        <taxon>Chondrichthyes</taxon>
        <taxon>Elasmobranchii</taxon>
        <taxon>Batoidea</taxon>
        <taxon>Torpediniformes</taxon>
        <taxon>Torpedinidae</taxon>
        <taxon>Tetronarce</taxon>
    </lineage>
</organism>
<comment type="function">
    <text>This glycoprotein is probably not a functional part of the chloride channel.</text>
</comment>
<comment type="subunit">
    <text>Homodimer; disulfide-linked.</text>
</comment>
<comment type="subcellular location">
    <subcellularLocation>
        <location evidence="3">Membrane</location>
        <topology evidence="3">Multi-pass membrane protein</topology>
    </subcellularLocation>
</comment>
<comment type="tissue specificity">
    <text>Electroplax tissue, brain (200-fold less), and heart (500-fold less).</text>
</comment>
<comment type="miscellaneous">
    <text>Binds 4-acetamido-4'-isothiocyanostilbene-2,2'-dis ulphonic acid (SITS), an inhibitor of a variety of anion transport proteins.</text>
</comment>
<comment type="similarity">
    <text evidence="3">Belongs to the glycosyl hydrolase 31 family.</text>
</comment>
<comment type="caution">
    <text evidence="3">Although related to the glycosyl hydrolase 31 family, lacks the conserved active sites, suggesting it has no glycosidase activity.</text>
</comment>